<keyword id="KW-0002">3D-structure</keyword>
<keyword id="KW-0148">Chlorophyll</keyword>
<keyword id="KW-0150">Chloroplast</keyword>
<keyword id="KW-0157">Chromophore</keyword>
<keyword id="KW-0903">Direct protein sequencing</keyword>
<keyword id="KW-0460">Magnesium</keyword>
<keyword id="KW-0472">Membrane</keyword>
<keyword id="KW-0479">Metal-binding</keyword>
<keyword id="KW-0597">Phosphoprotein</keyword>
<keyword id="KW-0602">Photosynthesis</keyword>
<keyword id="KW-0603">Photosystem I</keyword>
<keyword id="KW-0604">Photosystem II</keyword>
<keyword id="KW-0934">Plastid</keyword>
<keyword id="KW-0793">Thylakoid</keyword>
<keyword id="KW-0809">Transit peptide</keyword>
<keyword id="KW-0812">Transmembrane</keyword>
<keyword id="KW-1133">Transmembrane helix</keyword>
<protein>
    <recommendedName>
        <fullName>Chlorophyll a-b binding protein 1B-21, chloroplastic</fullName>
    </recommendedName>
    <alternativeName>
        <fullName>LHCI type I CAB-1B-21</fullName>
    </alternativeName>
    <alternativeName>
        <fullName>LHCI-730 chlorophyll a/b binding protein</fullName>
    </alternativeName>
    <alternativeName>
        <fullName>Light-harvesting complex I 21 kDa protein</fullName>
    </alternativeName>
</protein>
<sequence>MASSSGLRSCSAVGVPSLLAPSSRSGRSGLPFCAYATTSGRVTMSAEWFPGQPRPAHLDGSSPGDFGFDPLGLATVPENFERFKESEIYHCRWAMLCVPGVLVPEALGLGNWVKAQEWAALPDGQATYLGNPVPWGNLPTILAIEFLAIAFAEQQRTMEKDPEKKKYPGGAFDPLGFSKDPAKFEELKLKEIKNGRLAMLAFVGFCVQQSAYPGTGPLENLATHLADPWHNNIGDIVIPRNIYGP</sequence>
<proteinExistence type="evidence at protein level"/>
<name>CB121_HORVU</name>
<dbReference type="EMBL" id="AF218305">
    <property type="protein sequence ID" value="AAF23819.1"/>
    <property type="molecule type" value="mRNA"/>
</dbReference>
<dbReference type="EMBL" id="S68728">
    <property type="protein sequence ID" value="AAB29485.1"/>
    <property type="status" value="ALT_FRAME"/>
    <property type="molecule type" value="mRNA"/>
</dbReference>
<dbReference type="PIR" id="PQ0764">
    <property type="entry name" value="PQ0764"/>
</dbReference>
<dbReference type="PDB" id="7EW6">
    <property type="method" value="EM"/>
    <property type="resolution" value="3.40 A"/>
    <property type="chains" value="1=1-245"/>
</dbReference>
<dbReference type="PDB" id="7EWK">
    <property type="method" value="EM"/>
    <property type="resolution" value="3.88 A"/>
    <property type="chains" value="1=47-239"/>
</dbReference>
<dbReference type="PDBsum" id="7EW6"/>
<dbReference type="PDBsum" id="7EWK"/>
<dbReference type="EMDB" id="EMD-31348"/>
<dbReference type="EMDB" id="EMD-31350"/>
<dbReference type="SMR" id="Q9SDM1"/>
<dbReference type="ExpressionAtlas" id="Q9SDM1">
    <property type="expression patterns" value="baseline and differential"/>
</dbReference>
<dbReference type="GO" id="GO:0009535">
    <property type="term" value="C:chloroplast thylakoid membrane"/>
    <property type="evidence" value="ECO:0007669"/>
    <property type="project" value="UniProtKB-SubCell"/>
</dbReference>
<dbReference type="GO" id="GO:0009522">
    <property type="term" value="C:photosystem I"/>
    <property type="evidence" value="ECO:0007669"/>
    <property type="project" value="UniProtKB-KW"/>
</dbReference>
<dbReference type="GO" id="GO:0009523">
    <property type="term" value="C:photosystem II"/>
    <property type="evidence" value="ECO:0007669"/>
    <property type="project" value="UniProtKB-KW"/>
</dbReference>
<dbReference type="GO" id="GO:0016168">
    <property type="term" value="F:chlorophyll binding"/>
    <property type="evidence" value="ECO:0007669"/>
    <property type="project" value="UniProtKB-KW"/>
</dbReference>
<dbReference type="GO" id="GO:0046872">
    <property type="term" value="F:metal ion binding"/>
    <property type="evidence" value="ECO:0007669"/>
    <property type="project" value="UniProtKB-KW"/>
</dbReference>
<dbReference type="GO" id="GO:0009765">
    <property type="term" value="P:photosynthesis, light harvesting"/>
    <property type="evidence" value="ECO:0007669"/>
    <property type="project" value="InterPro"/>
</dbReference>
<dbReference type="FunFam" id="1.10.3460.10:FF:000004">
    <property type="entry name" value="Chlorophyll a-b binding protein, chloroplastic"/>
    <property type="match status" value="1"/>
</dbReference>
<dbReference type="Gene3D" id="1.10.3460.10">
    <property type="entry name" value="Chlorophyll a/b binding protein domain"/>
    <property type="match status" value="1"/>
</dbReference>
<dbReference type="InterPro" id="IPR001344">
    <property type="entry name" value="Chloro_AB-bd_pln"/>
</dbReference>
<dbReference type="InterPro" id="IPR022796">
    <property type="entry name" value="Chloroa_b-bind"/>
</dbReference>
<dbReference type="PANTHER" id="PTHR21649">
    <property type="entry name" value="CHLOROPHYLL A/B BINDING PROTEIN"/>
    <property type="match status" value="1"/>
</dbReference>
<dbReference type="Pfam" id="PF00504">
    <property type="entry name" value="Chloroa_b-bind"/>
    <property type="match status" value="1"/>
</dbReference>
<dbReference type="SUPFAM" id="SSF103511">
    <property type="entry name" value="Chlorophyll a-b binding protein"/>
    <property type="match status" value="1"/>
</dbReference>
<accession>Q9SDM1</accession>
<accession>Q36717</accession>
<gene>
    <name type="primary">LHC Ib-21</name>
    <name type="synonym">LHCA1</name>
</gene>
<comment type="function">
    <text evidence="1">The light-harvesting complex (LHC) functions as a light receptor, it captures and delivers excitation energy to photosystems with which it is closely associated.</text>
</comment>
<comment type="cofactor">
    <text evidence="1">Binds at least 14 chlorophylls (8 Chl-a and 6 Chl-b) and carotenoids such as lutein and neoxanthin.</text>
</comment>
<comment type="subunit">
    <text>The LHC complex consists of chlorophyll a-b binding proteins.</text>
</comment>
<comment type="subcellular location">
    <subcellularLocation>
        <location evidence="4">Plastid</location>
        <location evidence="4">Chloroplast thylakoid membrane</location>
        <topology evidence="4">Multi-pass membrane protein</topology>
    </subcellularLocation>
</comment>
<comment type="induction">
    <text evidence="3">By light.</text>
</comment>
<comment type="PTM">
    <text evidence="1">Photoregulated by reversible phosphorylation of its threonine residues.</text>
</comment>
<comment type="similarity">
    <text evidence="4">Belongs to the light-harvesting chlorophyll a/b-binding (LHC) protein family.</text>
</comment>
<comment type="sequence caution" evidence="4">
    <conflict type="frameshift">
        <sequence resource="EMBL-CDS" id="AAB29485"/>
    </conflict>
</comment>
<reference key="1">
    <citation type="submission" date="1999-12" db="EMBL/GenBank/DDBJ databases">
        <title>H. vulgare LHCI-730 chlorophyll a/b binding protein precursor (Lhca1) mRNA.</title>
        <authorList>
            <person name="Klimmek F."/>
            <person name="Knoetzel J."/>
            <person name="Grimme L.H."/>
        </authorList>
    </citation>
    <scope>NUCLEOTIDE SEQUENCE [MRNA]</scope>
    <source>
        <tissue>Leaf</tissue>
    </source>
</reference>
<reference key="2">
    <citation type="journal article" date="1993" name="Plant Physiol.">
        <title>Light-induced biogenesis of light-harvesting complex I (LHC I) during chloroplast development in barley (Hordeum vulgare). Studies using cDNA clones of the 21- and 20-kilodalton LHC I apoproteins.</title>
        <authorList>
            <person name="Anandan S."/>
            <person name="Morishige D.T."/>
            <person name="Thornber J.P."/>
        </authorList>
    </citation>
    <scope>NUCLEOTIDE SEQUENCE [MRNA] OF 25-245</scope>
    <scope>PROTEIN SEQUENCE OF 45-58</scope>
    <scope>INDUCTION BY LIGHT</scope>
</reference>
<organism>
    <name type="scientific">Hordeum vulgare</name>
    <name type="common">Barley</name>
    <dbReference type="NCBI Taxonomy" id="4513"/>
    <lineage>
        <taxon>Eukaryota</taxon>
        <taxon>Viridiplantae</taxon>
        <taxon>Streptophyta</taxon>
        <taxon>Embryophyta</taxon>
        <taxon>Tracheophyta</taxon>
        <taxon>Spermatophyta</taxon>
        <taxon>Magnoliopsida</taxon>
        <taxon>Liliopsida</taxon>
        <taxon>Poales</taxon>
        <taxon>Poaceae</taxon>
        <taxon>BOP clade</taxon>
        <taxon>Pooideae</taxon>
        <taxon>Triticodae</taxon>
        <taxon>Triticeae</taxon>
        <taxon>Hordeinae</taxon>
        <taxon>Hordeum</taxon>
    </lineage>
</organism>
<evidence type="ECO:0000250" key="1"/>
<evidence type="ECO:0000255" key="2"/>
<evidence type="ECO:0000269" key="3">
    <source>
    </source>
</evidence>
<evidence type="ECO:0000305" key="4"/>
<evidence type="ECO:0007829" key="5">
    <source>
        <dbReference type="PDB" id="7EW6"/>
    </source>
</evidence>
<feature type="transit peptide" description="Chloroplast" evidence="3">
    <location>
        <begin position="1"/>
        <end position="44"/>
    </location>
</feature>
<feature type="chain" id="PRO_5000057682" description="Chlorophyll a-b binding protein 1B-21, chloroplastic">
    <location>
        <begin position="45"/>
        <end position="245"/>
    </location>
</feature>
<feature type="transmembrane region" description="Helical" evidence="2">
    <location>
        <begin position="93"/>
        <end position="113"/>
    </location>
</feature>
<feature type="transmembrane region" description="Helical" evidence="2">
    <location>
        <begin position="132"/>
        <end position="152"/>
    </location>
</feature>
<feature type="binding site" description="axial binding residue" evidence="1">
    <location>
        <position position="48"/>
    </location>
    <ligand>
        <name>chlorophyll b</name>
        <dbReference type="ChEBI" id="CHEBI:61721"/>
        <label>1</label>
    </ligand>
    <ligandPart>
        <name>Mg</name>
        <dbReference type="ChEBI" id="CHEBI:25107"/>
    </ligandPart>
</feature>
<feature type="binding site" evidence="1">
    <location>
        <position position="68"/>
    </location>
    <ligand>
        <name>chlorophyll a</name>
        <dbReference type="ChEBI" id="CHEBI:58416"/>
        <label>1</label>
    </ligand>
</feature>
<feature type="binding site" description="axial binding residue" evidence="1">
    <location>
        <position position="87"/>
    </location>
    <ligand>
        <name>chlorophyll a</name>
        <dbReference type="ChEBI" id="CHEBI:58416"/>
        <label>1</label>
    </ligand>
    <ligandPart>
        <name>Mg</name>
        <dbReference type="ChEBI" id="CHEBI:25107"/>
    </ligandPart>
</feature>
<feature type="binding site" description="axial binding residue" evidence="1">
    <location>
        <position position="90"/>
    </location>
    <ligand>
        <name>chlorophyll a</name>
        <dbReference type="ChEBI" id="CHEBI:58416"/>
        <label>2</label>
    </ligand>
    <ligandPart>
        <name>Mg</name>
        <dbReference type="ChEBI" id="CHEBI:25107"/>
    </ligandPart>
</feature>
<feature type="binding site" evidence="1">
    <location>
        <position position="92"/>
    </location>
    <ligand>
        <name>chlorophyll b</name>
        <dbReference type="ChEBI" id="CHEBI:61721"/>
        <label>2</label>
    </ligand>
</feature>
<feature type="binding site" evidence="1">
    <location>
        <position position="129"/>
    </location>
    <ligand>
        <name>chlorophyll a</name>
        <dbReference type="ChEBI" id="CHEBI:58416"/>
        <label>3</label>
    </ligand>
</feature>
<feature type="binding site" description="axial binding residue" evidence="1">
    <location>
        <position position="133"/>
    </location>
    <ligand>
        <name>chlorophyll b</name>
        <dbReference type="ChEBI" id="CHEBI:61721"/>
        <label>2</label>
    </ligand>
    <ligandPart>
        <name>Mg</name>
        <dbReference type="ChEBI" id="CHEBI:25107"/>
    </ligandPart>
</feature>
<feature type="binding site" description="axial binding residue" evidence="1">
    <location>
        <position position="153"/>
    </location>
    <ligand>
        <name>chlorophyll b</name>
        <dbReference type="ChEBI" id="CHEBI:61721"/>
        <label>3</label>
    </ligand>
    <ligandPart>
        <name>Mg</name>
        <dbReference type="ChEBI" id="CHEBI:25107"/>
    </ligandPart>
</feature>
<feature type="binding site" evidence="1">
    <location>
        <position position="156"/>
    </location>
    <ligand>
        <name>chlorophyll b</name>
        <dbReference type="ChEBI" id="CHEBI:61721"/>
        <label>4</label>
    </ligand>
</feature>
<feature type="binding site" evidence="1">
    <location>
        <position position="190"/>
    </location>
    <ligand>
        <name>chlorophyll a</name>
        <dbReference type="ChEBI" id="CHEBI:58416"/>
        <label>5</label>
    </ligand>
</feature>
<feature type="binding site" description="axial binding residue" evidence="1">
    <location>
        <position position="191"/>
    </location>
    <ligand>
        <name>chlorophyll a</name>
        <dbReference type="ChEBI" id="CHEBI:58416"/>
        <label>3</label>
    </ligand>
    <ligandPart>
        <name>Mg</name>
        <dbReference type="ChEBI" id="CHEBI:25107"/>
    </ligandPart>
</feature>
<feature type="binding site" description="axial binding residue" evidence="1">
    <location>
        <position position="194"/>
    </location>
    <ligand>
        <name>chlorophyll a</name>
        <dbReference type="ChEBI" id="CHEBI:58416"/>
        <label>4</label>
    </ligand>
    <ligandPart>
        <name>Mg</name>
        <dbReference type="ChEBI" id="CHEBI:25107"/>
    </ligandPart>
</feature>
<feature type="binding site" evidence="1">
    <location>
        <position position="196"/>
    </location>
    <ligand>
        <name>chlorophyll a</name>
        <dbReference type="ChEBI" id="CHEBI:58416"/>
        <label>1</label>
    </ligand>
</feature>
<feature type="binding site" description="axial binding residue" evidence="1">
    <location>
        <position position="208"/>
    </location>
    <ligand>
        <name>chlorophyll a</name>
        <dbReference type="ChEBI" id="CHEBI:58416"/>
        <label>5</label>
    </ligand>
    <ligandPart>
        <name>Mg</name>
        <dbReference type="ChEBI" id="CHEBI:25107"/>
    </ligandPart>
</feature>
<feature type="binding site" description="axial binding residue" evidence="1">
    <location>
        <position position="224"/>
    </location>
    <ligand>
        <name>chlorophyll a</name>
        <dbReference type="ChEBI" id="CHEBI:58416"/>
        <label>6</label>
    </ligand>
    <ligandPart>
        <name>Mg</name>
        <dbReference type="ChEBI" id="CHEBI:25107"/>
    </ligandPart>
</feature>
<feature type="sequence conflict" description="In Ref. 2; AAB29485." evidence="4" ref="2">
    <original>S</original>
    <variation>P</variation>
    <location>
        <position position="25"/>
    </location>
</feature>
<feature type="sequence conflict" description="In Ref. 2; AAB29485." evidence="4" ref="2">
    <original>D</original>
    <variation>A</variation>
    <location>
        <position position="59"/>
    </location>
</feature>
<feature type="helix" evidence="5">
    <location>
        <begin position="77"/>
        <end position="106"/>
    </location>
</feature>
<feature type="helix" evidence="5">
    <location>
        <begin position="114"/>
        <end position="116"/>
    </location>
</feature>
<feature type="turn" evidence="5">
    <location>
        <begin position="118"/>
        <end position="120"/>
    </location>
</feature>
<feature type="helix" evidence="5">
    <location>
        <begin position="138"/>
        <end position="157"/>
    </location>
</feature>
<feature type="helix" evidence="5">
    <location>
        <begin position="163"/>
        <end position="165"/>
    </location>
</feature>
<feature type="helix" evidence="5">
    <location>
        <begin position="170"/>
        <end position="172"/>
    </location>
</feature>
<feature type="helix" evidence="5">
    <location>
        <begin position="177"/>
        <end position="179"/>
    </location>
</feature>
<feature type="helix" evidence="5">
    <location>
        <begin position="181"/>
        <end position="211"/>
    </location>
</feature>
<feature type="helix" evidence="5">
    <location>
        <begin position="217"/>
        <end position="226"/>
    </location>
</feature>
<feature type="turn" evidence="5">
    <location>
        <begin position="228"/>
        <end position="230"/>
    </location>
</feature>
<feature type="turn" evidence="5">
    <location>
        <begin position="233"/>
        <end position="236"/>
    </location>
</feature>